<comment type="function">
    <text evidence="1">ATPase subunit of a proteasome-like degradation complex; this subunit has chaperone activity. The binding of ATP and its subsequent hydrolysis by HslU are essential for unfolding of protein substrates subsequently hydrolyzed by HslV. HslU recognizes the N-terminal part of its protein substrates and unfolds these before they are guided to HslV for hydrolysis.</text>
</comment>
<comment type="subunit">
    <text evidence="1">A double ring-shaped homohexamer of HslV is capped on each side by a ring-shaped HslU homohexamer. The assembly of the HslU/HslV complex is dependent on binding of ATP.</text>
</comment>
<comment type="subcellular location">
    <subcellularLocation>
        <location evidence="1">Cytoplasm</location>
    </subcellularLocation>
</comment>
<comment type="similarity">
    <text evidence="1">Belongs to the ClpX chaperone family. HslU subfamily.</text>
</comment>
<protein>
    <recommendedName>
        <fullName evidence="1">ATP-dependent protease ATPase subunit HslU</fullName>
    </recommendedName>
    <alternativeName>
        <fullName evidence="1">Unfoldase HslU</fullName>
    </alternativeName>
</protein>
<dbReference type="EMBL" id="CP000090">
    <property type="protein sequence ID" value="AAZ59550.1"/>
    <property type="molecule type" value="Genomic_DNA"/>
</dbReference>
<dbReference type="SMR" id="Q476Y3"/>
<dbReference type="STRING" id="264198.Reut_A0168"/>
<dbReference type="KEGG" id="reu:Reut_A0168"/>
<dbReference type="eggNOG" id="COG1220">
    <property type="taxonomic scope" value="Bacteria"/>
</dbReference>
<dbReference type="HOGENOM" id="CLU_033123_0_0_4"/>
<dbReference type="OrthoDB" id="9804062at2"/>
<dbReference type="GO" id="GO:0009376">
    <property type="term" value="C:HslUV protease complex"/>
    <property type="evidence" value="ECO:0007669"/>
    <property type="project" value="UniProtKB-UniRule"/>
</dbReference>
<dbReference type="GO" id="GO:0005524">
    <property type="term" value="F:ATP binding"/>
    <property type="evidence" value="ECO:0007669"/>
    <property type="project" value="UniProtKB-UniRule"/>
</dbReference>
<dbReference type="GO" id="GO:0016887">
    <property type="term" value="F:ATP hydrolysis activity"/>
    <property type="evidence" value="ECO:0007669"/>
    <property type="project" value="InterPro"/>
</dbReference>
<dbReference type="GO" id="GO:0008233">
    <property type="term" value="F:peptidase activity"/>
    <property type="evidence" value="ECO:0007669"/>
    <property type="project" value="InterPro"/>
</dbReference>
<dbReference type="GO" id="GO:0036402">
    <property type="term" value="F:proteasome-activating activity"/>
    <property type="evidence" value="ECO:0007669"/>
    <property type="project" value="UniProtKB-UniRule"/>
</dbReference>
<dbReference type="GO" id="GO:0043335">
    <property type="term" value="P:protein unfolding"/>
    <property type="evidence" value="ECO:0007669"/>
    <property type="project" value="UniProtKB-UniRule"/>
</dbReference>
<dbReference type="GO" id="GO:0051603">
    <property type="term" value="P:proteolysis involved in protein catabolic process"/>
    <property type="evidence" value="ECO:0007669"/>
    <property type="project" value="TreeGrafter"/>
</dbReference>
<dbReference type="CDD" id="cd19498">
    <property type="entry name" value="RecA-like_HslU"/>
    <property type="match status" value="1"/>
</dbReference>
<dbReference type="FunFam" id="1.10.8.10:FF:000028">
    <property type="entry name" value="ATP-dependent protease ATPase subunit HslU"/>
    <property type="match status" value="1"/>
</dbReference>
<dbReference type="FunFam" id="3.40.50.300:FF:000213">
    <property type="entry name" value="ATP-dependent protease ATPase subunit HslU"/>
    <property type="match status" value="1"/>
</dbReference>
<dbReference type="FunFam" id="3.40.50.300:FF:000220">
    <property type="entry name" value="ATP-dependent protease ATPase subunit HslU"/>
    <property type="match status" value="1"/>
</dbReference>
<dbReference type="Gene3D" id="1.10.8.60">
    <property type="match status" value="1"/>
</dbReference>
<dbReference type="Gene3D" id="1.10.8.10">
    <property type="entry name" value="DNA helicase RuvA subunit, C-terminal domain"/>
    <property type="match status" value="1"/>
</dbReference>
<dbReference type="Gene3D" id="3.40.50.300">
    <property type="entry name" value="P-loop containing nucleotide triphosphate hydrolases"/>
    <property type="match status" value="2"/>
</dbReference>
<dbReference type="HAMAP" id="MF_00249">
    <property type="entry name" value="HslU"/>
    <property type="match status" value="1"/>
</dbReference>
<dbReference type="InterPro" id="IPR003593">
    <property type="entry name" value="AAA+_ATPase"/>
</dbReference>
<dbReference type="InterPro" id="IPR050052">
    <property type="entry name" value="ATP-dep_Clp_protease_ClpX"/>
</dbReference>
<dbReference type="InterPro" id="IPR003959">
    <property type="entry name" value="ATPase_AAA_core"/>
</dbReference>
<dbReference type="InterPro" id="IPR019489">
    <property type="entry name" value="Clp_ATPase_C"/>
</dbReference>
<dbReference type="InterPro" id="IPR004491">
    <property type="entry name" value="HslU"/>
</dbReference>
<dbReference type="InterPro" id="IPR027417">
    <property type="entry name" value="P-loop_NTPase"/>
</dbReference>
<dbReference type="NCBIfam" id="TIGR00390">
    <property type="entry name" value="hslU"/>
    <property type="match status" value="1"/>
</dbReference>
<dbReference type="NCBIfam" id="NF003544">
    <property type="entry name" value="PRK05201.1"/>
    <property type="match status" value="1"/>
</dbReference>
<dbReference type="PANTHER" id="PTHR48102">
    <property type="entry name" value="ATP-DEPENDENT CLP PROTEASE ATP-BINDING SUBUNIT CLPX-LIKE, MITOCHONDRIAL-RELATED"/>
    <property type="match status" value="1"/>
</dbReference>
<dbReference type="PANTHER" id="PTHR48102:SF3">
    <property type="entry name" value="ATP-DEPENDENT PROTEASE ATPASE SUBUNIT HSLU"/>
    <property type="match status" value="1"/>
</dbReference>
<dbReference type="Pfam" id="PF00004">
    <property type="entry name" value="AAA"/>
    <property type="match status" value="1"/>
</dbReference>
<dbReference type="Pfam" id="PF07724">
    <property type="entry name" value="AAA_2"/>
    <property type="match status" value="1"/>
</dbReference>
<dbReference type="SMART" id="SM00382">
    <property type="entry name" value="AAA"/>
    <property type="match status" value="1"/>
</dbReference>
<dbReference type="SMART" id="SM01086">
    <property type="entry name" value="ClpB_D2-small"/>
    <property type="match status" value="1"/>
</dbReference>
<dbReference type="SUPFAM" id="SSF52540">
    <property type="entry name" value="P-loop containing nucleoside triphosphate hydrolases"/>
    <property type="match status" value="1"/>
</dbReference>
<sequence>MSHTMTPSEIVSELDKHIIGQNKAKKAVAVALRNRWRRQQVAEPLRQEITPKNILMIGPTGVGKTEIARRLAKLADAPFIKIEATKFTEVGYVGRDVDTIVRDLAEMAIKQTRESEMKKVRTKAEEAAEDRLLDVLLPPPRDIGFSQPEEKDSNTRQVFRKKLREGQLDDKDIELEVAAGLPSMDIMGPPGMEEMTEQIRSMFAGMGQGKKHRRKMKVKEAFKLLIDEEAAKLVNDEELKHKAIANVEQNGIVFLDEIDKIANRSELGGGEVSRQGVQRDLLPLVEGTTVSTKYGMIKTDHILFIASGAFHLSKPSDLIPELQGRFPIRVELESLSVQDFEAILTQTDASLTKQYQALLKTEEVELQFAPDGIRRLAEIAFSVNEKVENIGARRLYTVMERLLEDLSFHASKSSGETVTIDAAYVNERLGDLAVNEDLSRYVL</sequence>
<feature type="chain" id="PRO_1000012783" description="ATP-dependent protease ATPase subunit HslU">
    <location>
        <begin position="1"/>
        <end position="443"/>
    </location>
</feature>
<feature type="binding site" evidence="1">
    <location>
        <position position="19"/>
    </location>
    <ligand>
        <name>ATP</name>
        <dbReference type="ChEBI" id="CHEBI:30616"/>
    </ligand>
</feature>
<feature type="binding site" evidence="1">
    <location>
        <begin position="61"/>
        <end position="66"/>
    </location>
    <ligand>
        <name>ATP</name>
        <dbReference type="ChEBI" id="CHEBI:30616"/>
    </ligand>
</feature>
<feature type="binding site" evidence="1">
    <location>
        <position position="256"/>
    </location>
    <ligand>
        <name>ATP</name>
        <dbReference type="ChEBI" id="CHEBI:30616"/>
    </ligand>
</feature>
<feature type="binding site" evidence="1">
    <location>
        <position position="321"/>
    </location>
    <ligand>
        <name>ATP</name>
        <dbReference type="ChEBI" id="CHEBI:30616"/>
    </ligand>
</feature>
<feature type="binding site" evidence="1">
    <location>
        <position position="393"/>
    </location>
    <ligand>
        <name>ATP</name>
        <dbReference type="ChEBI" id="CHEBI:30616"/>
    </ligand>
</feature>
<proteinExistence type="inferred from homology"/>
<evidence type="ECO:0000255" key="1">
    <source>
        <dbReference type="HAMAP-Rule" id="MF_00249"/>
    </source>
</evidence>
<reference key="1">
    <citation type="journal article" date="2010" name="PLoS ONE">
        <title>The complete multipartite genome sequence of Cupriavidus necator JMP134, a versatile pollutant degrader.</title>
        <authorList>
            <person name="Lykidis A."/>
            <person name="Perez-Pantoja D."/>
            <person name="Ledger T."/>
            <person name="Mavromatis K."/>
            <person name="Anderson I.J."/>
            <person name="Ivanova N.N."/>
            <person name="Hooper S.D."/>
            <person name="Lapidus A."/>
            <person name="Lucas S."/>
            <person name="Gonzalez B."/>
            <person name="Kyrpides N.C."/>
        </authorList>
    </citation>
    <scope>NUCLEOTIDE SEQUENCE [LARGE SCALE GENOMIC DNA]</scope>
    <source>
        <strain>JMP134 / LMG 1197</strain>
    </source>
</reference>
<organism>
    <name type="scientific">Cupriavidus pinatubonensis (strain JMP 134 / LMG 1197)</name>
    <name type="common">Cupriavidus necator (strain JMP 134)</name>
    <dbReference type="NCBI Taxonomy" id="264198"/>
    <lineage>
        <taxon>Bacteria</taxon>
        <taxon>Pseudomonadati</taxon>
        <taxon>Pseudomonadota</taxon>
        <taxon>Betaproteobacteria</taxon>
        <taxon>Burkholderiales</taxon>
        <taxon>Burkholderiaceae</taxon>
        <taxon>Cupriavidus</taxon>
    </lineage>
</organism>
<gene>
    <name evidence="1" type="primary">hslU</name>
    <name type="ordered locus">Reut_A0168</name>
</gene>
<accession>Q476Y3</accession>
<keyword id="KW-0067">ATP-binding</keyword>
<keyword id="KW-0143">Chaperone</keyword>
<keyword id="KW-0963">Cytoplasm</keyword>
<keyword id="KW-0547">Nucleotide-binding</keyword>
<keyword id="KW-0346">Stress response</keyword>
<name>HSLU_CUPPJ</name>